<sequence>MTTPSTKLNSGYDMPLVGFGLWKVNNETCADQIYHAIKAGYRLFDGACDYGNEVEAGKGVARAIQEGIVKREDLFIVSKLWNSFHDGDRVEPICRKQLADWGLDYFDLFIVHFPIALKYVDPAVRYPPGWLSENNKLEFSNASIQETWTAMESLVDKKLARSIGVSNFSAQLLMDLLRYARIRPATLQIEHHPYLTQERLVTYAQKEGIAVTAYSSFGPLSFVELDLKDAHETPKLFDHDVIKGIAQKHGKTPAQVLLRWATQRNIAVIPKSNDPTRLAQNLDVTGWDLETSEIEVISSLNRNLRFNDPLAPSRLDPIPDD</sequence>
<evidence type="ECO:0000250" key="1"/>
<evidence type="ECO:0000305" key="2"/>
<name>XYL1_NEOFI</name>
<proteinExistence type="inferred from homology"/>
<comment type="function">
    <text evidence="1">Catalyzes the initial reaction in the xylose utilization pathway by reducing D-xylose into xylitol. Xylose is a major component of hemicelluloses such as xylan. Most fungi utilize D-xylose via three enzymatic reactions, xylose reductase (XR), xylitol dehydrogenase (XDH), and xylulokinase, to form xylulose 5-phosphate, which enters pentose phosphate pathway (By similarity).</text>
</comment>
<comment type="catalytic activity">
    <reaction>
        <text>xylitol + NAD(+) = D-xylose + NADH + H(+)</text>
        <dbReference type="Rhea" id="RHEA:27441"/>
        <dbReference type="ChEBI" id="CHEBI:15378"/>
        <dbReference type="ChEBI" id="CHEBI:17151"/>
        <dbReference type="ChEBI" id="CHEBI:53455"/>
        <dbReference type="ChEBI" id="CHEBI:57540"/>
        <dbReference type="ChEBI" id="CHEBI:57945"/>
        <dbReference type="EC" id="1.1.1.307"/>
    </reaction>
</comment>
<comment type="catalytic activity">
    <reaction>
        <text>xylitol + NADP(+) = D-xylose + NADPH + H(+)</text>
        <dbReference type="Rhea" id="RHEA:27445"/>
        <dbReference type="ChEBI" id="CHEBI:15378"/>
        <dbReference type="ChEBI" id="CHEBI:17151"/>
        <dbReference type="ChEBI" id="CHEBI:53455"/>
        <dbReference type="ChEBI" id="CHEBI:57783"/>
        <dbReference type="ChEBI" id="CHEBI:58349"/>
        <dbReference type="EC" id="1.1.1.307"/>
    </reaction>
</comment>
<comment type="pathway">
    <text>Carbohydrate metabolism; D-xylose degradation.</text>
</comment>
<comment type="similarity">
    <text evidence="2">Belongs to the aldo/keto reductase family.</text>
</comment>
<accession>A1D4E3</accession>
<gene>
    <name type="primary">xyl1</name>
    <name type="ORF">NFIA_019940</name>
</gene>
<keyword id="KW-0119">Carbohydrate metabolism</keyword>
<keyword id="KW-0520">NAD</keyword>
<keyword id="KW-0521">NADP</keyword>
<keyword id="KW-0560">Oxidoreductase</keyword>
<keyword id="KW-1185">Reference proteome</keyword>
<keyword id="KW-0859">Xylose metabolism</keyword>
<reference key="1">
    <citation type="journal article" date="2008" name="PLoS Genet.">
        <title>Genomic islands in the pathogenic filamentous fungus Aspergillus fumigatus.</title>
        <authorList>
            <person name="Fedorova N.D."/>
            <person name="Khaldi N."/>
            <person name="Joardar V.S."/>
            <person name="Maiti R."/>
            <person name="Amedeo P."/>
            <person name="Anderson M.J."/>
            <person name="Crabtree J."/>
            <person name="Silva J.C."/>
            <person name="Badger J.H."/>
            <person name="Albarraq A."/>
            <person name="Angiuoli S."/>
            <person name="Bussey H."/>
            <person name="Bowyer P."/>
            <person name="Cotty P.J."/>
            <person name="Dyer P.S."/>
            <person name="Egan A."/>
            <person name="Galens K."/>
            <person name="Fraser-Liggett C.M."/>
            <person name="Haas B.J."/>
            <person name="Inman J.M."/>
            <person name="Kent R."/>
            <person name="Lemieux S."/>
            <person name="Malavazi I."/>
            <person name="Orvis J."/>
            <person name="Roemer T."/>
            <person name="Ronning C.M."/>
            <person name="Sundaram J.P."/>
            <person name="Sutton G."/>
            <person name="Turner G."/>
            <person name="Venter J.C."/>
            <person name="White O.R."/>
            <person name="Whitty B.R."/>
            <person name="Youngman P."/>
            <person name="Wolfe K.H."/>
            <person name="Goldman G.H."/>
            <person name="Wortman J.R."/>
            <person name="Jiang B."/>
            <person name="Denning D.W."/>
            <person name="Nierman W.C."/>
        </authorList>
    </citation>
    <scope>NUCLEOTIDE SEQUENCE [LARGE SCALE GENOMIC DNA]</scope>
    <source>
        <strain>ATCC 1020 / DSM 3700 / CBS 544.65 / FGSC A1164 / JCM 1740 / NRRL 181 / WB 181</strain>
    </source>
</reference>
<feature type="chain" id="PRO_0000393505" description="Probable NAD(P)H-dependent D-xylose reductase xyl1">
    <location>
        <begin position="1"/>
        <end position="321"/>
    </location>
</feature>
<feature type="active site" description="Proton donor" evidence="1">
    <location>
        <position position="50"/>
    </location>
</feature>
<feature type="binding site" evidence="1">
    <location>
        <position position="112"/>
    </location>
    <ligand>
        <name>substrate</name>
    </ligand>
</feature>
<feature type="binding site" evidence="1">
    <location>
        <begin position="166"/>
        <end position="167"/>
    </location>
    <ligand>
        <name>NAD(+)</name>
        <dbReference type="ChEBI" id="CHEBI:57540"/>
    </ligand>
</feature>
<feature type="binding site" evidence="1">
    <location>
        <begin position="215"/>
        <end position="224"/>
    </location>
    <ligand>
        <name>NAD(+)</name>
        <dbReference type="ChEBI" id="CHEBI:57540"/>
    </ligand>
</feature>
<feature type="binding site" evidence="1">
    <location>
        <begin position="271"/>
        <end position="281"/>
    </location>
    <ligand>
        <name>NAD(+)</name>
        <dbReference type="ChEBI" id="CHEBI:57540"/>
    </ligand>
</feature>
<feature type="site" description="Lowers pKa of active site Tyr" evidence="1">
    <location>
        <position position="79"/>
    </location>
</feature>
<protein>
    <recommendedName>
        <fullName>Probable NAD(P)H-dependent D-xylose reductase xyl1</fullName>
        <shortName>XR</shortName>
        <ecNumber>1.1.1.307</ecNumber>
    </recommendedName>
</protein>
<organism>
    <name type="scientific">Neosartorya fischeri (strain ATCC 1020 / DSM 3700 / CBS 544.65 / FGSC A1164 / JCM 1740 / NRRL 181 / WB 181)</name>
    <name type="common">Aspergillus fischerianus</name>
    <dbReference type="NCBI Taxonomy" id="331117"/>
    <lineage>
        <taxon>Eukaryota</taxon>
        <taxon>Fungi</taxon>
        <taxon>Dikarya</taxon>
        <taxon>Ascomycota</taxon>
        <taxon>Pezizomycotina</taxon>
        <taxon>Eurotiomycetes</taxon>
        <taxon>Eurotiomycetidae</taxon>
        <taxon>Eurotiales</taxon>
        <taxon>Aspergillaceae</taxon>
        <taxon>Aspergillus</taxon>
        <taxon>Aspergillus subgen. Fumigati</taxon>
    </lineage>
</organism>
<dbReference type="EC" id="1.1.1.307"/>
<dbReference type="EMBL" id="DS027688">
    <property type="protein sequence ID" value="EAW23286.1"/>
    <property type="molecule type" value="Genomic_DNA"/>
</dbReference>
<dbReference type="RefSeq" id="XP_001265183.1">
    <property type="nucleotide sequence ID" value="XM_001265182.1"/>
</dbReference>
<dbReference type="SMR" id="A1D4E3"/>
<dbReference type="STRING" id="331117.A1D4E3"/>
<dbReference type="EnsemblFungi" id="EAW23286">
    <property type="protein sequence ID" value="EAW23286"/>
    <property type="gene ID" value="NFIA_019940"/>
</dbReference>
<dbReference type="GeneID" id="4591084"/>
<dbReference type="KEGG" id="nfi:NFIA_019940"/>
<dbReference type="VEuPathDB" id="FungiDB:NFIA_019940"/>
<dbReference type="eggNOG" id="KOG1577">
    <property type="taxonomic scope" value="Eukaryota"/>
</dbReference>
<dbReference type="HOGENOM" id="CLU_023205_0_0_1"/>
<dbReference type="OMA" id="VHWPSEG"/>
<dbReference type="OrthoDB" id="416253at2759"/>
<dbReference type="UniPathway" id="UPA00810"/>
<dbReference type="Proteomes" id="UP000006702">
    <property type="component" value="Unassembled WGS sequence"/>
</dbReference>
<dbReference type="GO" id="GO:0032866">
    <property type="term" value="F:D-xylose reductase (NADPH) activity"/>
    <property type="evidence" value="ECO:0007669"/>
    <property type="project" value="InterPro"/>
</dbReference>
<dbReference type="GO" id="GO:0042843">
    <property type="term" value="P:D-xylose catabolic process"/>
    <property type="evidence" value="ECO:0007669"/>
    <property type="project" value="UniProtKB-UniPathway"/>
</dbReference>
<dbReference type="CDD" id="cd19115">
    <property type="entry name" value="AKR_AKR2D1"/>
    <property type="match status" value="1"/>
</dbReference>
<dbReference type="FunFam" id="3.20.20.100:FF:000007">
    <property type="entry name" value="NAD(P)H-dependent D-xylose reductase xyl1"/>
    <property type="match status" value="1"/>
</dbReference>
<dbReference type="Gene3D" id="3.20.20.100">
    <property type="entry name" value="NADP-dependent oxidoreductase domain"/>
    <property type="match status" value="1"/>
</dbReference>
<dbReference type="InterPro" id="IPR020471">
    <property type="entry name" value="AKR"/>
</dbReference>
<dbReference type="InterPro" id="IPR044487">
    <property type="entry name" value="AKR2D"/>
</dbReference>
<dbReference type="InterPro" id="IPR018170">
    <property type="entry name" value="Aldo/ket_reductase_CS"/>
</dbReference>
<dbReference type="InterPro" id="IPR023210">
    <property type="entry name" value="NADP_OxRdtase_dom"/>
</dbReference>
<dbReference type="InterPro" id="IPR036812">
    <property type="entry name" value="NADP_OxRdtase_dom_sf"/>
</dbReference>
<dbReference type="PANTHER" id="PTHR11732">
    <property type="entry name" value="ALDO/KETO REDUCTASE"/>
    <property type="match status" value="1"/>
</dbReference>
<dbReference type="Pfam" id="PF00248">
    <property type="entry name" value="Aldo_ket_red"/>
    <property type="match status" value="1"/>
</dbReference>
<dbReference type="PIRSF" id="PIRSF000097">
    <property type="entry name" value="AKR"/>
    <property type="match status" value="1"/>
</dbReference>
<dbReference type="PRINTS" id="PR00069">
    <property type="entry name" value="ALDKETRDTASE"/>
</dbReference>
<dbReference type="SUPFAM" id="SSF51430">
    <property type="entry name" value="NAD(P)-linked oxidoreductase"/>
    <property type="match status" value="1"/>
</dbReference>
<dbReference type="PROSITE" id="PS00798">
    <property type="entry name" value="ALDOKETO_REDUCTASE_1"/>
    <property type="match status" value="1"/>
</dbReference>
<dbReference type="PROSITE" id="PS00062">
    <property type="entry name" value="ALDOKETO_REDUCTASE_2"/>
    <property type="match status" value="1"/>
</dbReference>
<dbReference type="PROSITE" id="PS00063">
    <property type="entry name" value="ALDOKETO_REDUCTASE_3"/>
    <property type="match status" value="1"/>
</dbReference>